<gene>
    <name evidence="1" type="primary">rpl32</name>
</gene>
<keyword id="KW-0150">Chloroplast</keyword>
<keyword id="KW-0934">Plastid</keyword>
<keyword id="KW-0687">Ribonucleoprotein</keyword>
<keyword id="KW-0689">Ribosomal protein</keyword>
<dbReference type="EMBL" id="DQ229107">
    <property type="protein sequence ID" value="ABA61984.1"/>
    <property type="molecule type" value="Genomic_DNA"/>
</dbReference>
<dbReference type="RefSeq" id="YP_635796.1">
    <property type="nucleotide sequence ID" value="NC_008097.1"/>
</dbReference>
<dbReference type="SMR" id="Q1ACF1"/>
<dbReference type="GeneID" id="4100254"/>
<dbReference type="GO" id="GO:0009507">
    <property type="term" value="C:chloroplast"/>
    <property type="evidence" value="ECO:0007669"/>
    <property type="project" value="UniProtKB-SubCell"/>
</dbReference>
<dbReference type="GO" id="GO:0015934">
    <property type="term" value="C:large ribosomal subunit"/>
    <property type="evidence" value="ECO:0007669"/>
    <property type="project" value="InterPro"/>
</dbReference>
<dbReference type="GO" id="GO:0003735">
    <property type="term" value="F:structural constituent of ribosome"/>
    <property type="evidence" value="ECO:0007669"/>
    <property type="project" value="InterPro"/>
</dbReference>
<dbReference type="GO" id="GO:0006412">
    <property type="term" value="P:translation"/>
    <property type="evidence" value="ECO:0007669"/>
    <property type="project" value="UniProtKB-UniRule"/>
</dbReference>
<dbReference type="HAMAP" id="MF_00340">
    <property type="entry name" value="Ribosomal_bL32"/>
    <property type="match status" value="1"/>
</dbReference>
<dbReference type="InterPro" id="IPR002677">
    <property type="entry name" value="Ribosomal_bL32"/>
</dbReference>
<dbReference type="InterPro" id="IPR044958">
    <property type="entry name" value="Ribosomal_bL32_plant/cyanobact"/>
</dbReference>
<dbReference type="InterPro" id="IPR011332">
    <property type="entry name" value="Ribosomal_zn-bd"/>
</dbReference>
<dbReference type="PANTHER" id="PTHR36083">
    <property type="entry name" value="50S RIBOSOMAL PROTEIN L32, CHLOROPLASTIC"/>
    <property type="match status" value="1"/>
</dbReference>
<dbReference type="PANTHER" id="PTHR36083:SF1">
    <property type="entry name" value="LARGE RIBOSOMAL SUBUNIT PROTEIN BL32C"/>
    <property type="match status" value="1"/>
</dbReference>
<dbReference type="Pfam" id="PF01783">
    <property type="entry name" value="Ribosomal_L32p"/>
    <property type="match status" value="1"/>
</dbReference>
<dbReference type="SUPFAM" id="SSF57829">
    <property type="entry name" value="Zn-binding ribosomal proteins"/>
    <property type="match status" value="1"/>
</dbReference>
<protein>
    <recommendedName>
        <fullName evidence="1">Large ribosomal subunit protein bL32c</fullName>
    </recommendedName>
    <alternativeName>
        <fullName evidence="2">50S ribosomal protein L32, chloroplastic</fullName>
    </alternativeName>
</protein>
<reference key="1">
    <citation type="journal article" date="2006" name="Mol. Biol. Evol.">
        <title>The chloroplast genome sequence of Chara vulgaris sheds new light into the closest green algal relatives of land plants.</title>
        <authorList>
            <person name="Turmel M."/>
            <person name="Otis C."/>
            <person name="Lemieux C."/>
        </authorList>
    </citation>
    <scope>NUCLEOTIDE SEQUENCE [LARGE SCALE GENOMIC DNA]</scope>
</reference>
<accession>Q1ACF1</accession>
<comment type="subcellular location">
    <subcellularLocation>
        <location>Plastid</location>
        <location>Chloroplast</location>
    </subcellularLocation>
</comment>
<comment type="similarity">
    <text evidence="1">Belongs to the bacterial ribosomal protein bL32 family.</text>
</comment>
<sequence length="67" mass="7705">MAVPKKRTSKSKTKIRKTTWKKEACESAIKAFSLAKSILSQRSKSFYYSKKNIILPSSFESQSKEEE</sequence>
<evidence type="ECO:0000255" key="1">
    <source>
        <dbReference type="HAMAP-Rule" id="MF_00340"/>
    </source>
</evidence>
<evidence type="ECO:0000305" key="2"/>
<feature type="chain" id="PRO_0000276462" description="Large ribosomal subunit protein bL32c">
    <location>
        <begin position="1"/>
        <end position="67"/>
    </location>
</feature>
<geneLocation type="chloroplast"/>
<name>RK32_CHAVU</name>
<organism>
    <name type="scientific">Chara vulgaris</name>
    <name type="common">Common stonewort</name>
    <dbReference type="NCBI Taxonomy" id="55564"/>
    <lineage>
        <taxon>Eukaryota</taxon>
        <taxon>Viridiplantae</taxon>
        <taxon>Streptophyta</taxon>
        <taxon>Charophyceae</taxon>
        <taxon>Charales</taxon>
        <taxon>Characeae</taxon>
        <taxon>Chara</taxon>
    </lineage>
</organism>
<proteinExistence type="inferred from homology"/>